<keyword id="KW-1185">Reference proteome</keyword>
<keyword id="KW-0687">Ribonucleoprotein</keyword>
<keyword id="KW-0689">Ribosomal protein</keyword>
<keyword id="KW-0694">RNA-binding</keyword>
<keyword id="KW-0699">rRNA-binding</keyword>
<keyword id="KW-0820">tRNA-binding</keyword>
<gene>
    <name evidence="1" type="primary">rplP</name>
    <name type="ordered locus">EC55989_3729</name>
</gene>
<sequence length="136" mass="15281">MLQPKRTKFRKMHKGRNRGLAQGTDVSFGSFGLKAVGRGRLTARQIEAARRAMTRAVKRQGKIWIRVFPDKPITEKPLAVRMGKGKGNVEYWVALIQPGKVLYEMDGVPEELAREAFKLAAAKLPIKTTFVTKTVM</sequence>
<reference key="1">
    <citation type="journal article" date="2009" name="PLoS Genet.">
        <title>Organised genome dynamics in the Escherichia coli species results in highly diverse adaptive paths.</title>
        <authorList>
            <person name="Touchon M."/>
            <person name="Hoede C."/>
            <person name="Tenaillon O."/>
            <person name="Barbe V."/>
            <person name="Baeriswyl S."/>
            <person name="Bidet P."/>
            <person name="Bingen E."/>
            <person name="Bonacorsi S."/>
            <person name="Bouchier C."/>
            <person name="Bouvet O."/>
            <person name="Calteau A."/>
            <person name="Chiapello H."/>
            <person name="Clermont O."/>
            <person name="Cruveiller S."/>
            <person name="Danchin A."/>
            <person name="Diard M."/>
            <person name="Dossat C."/>
            <person name="Karoui M.E."/>
            <person name="Frapy E."/>
            <person name="Garry L."/>
            <person name="Ghigo J.M."/>
            <person name="Gilles A.M."/>
            <person name="Johnson J."/>
            <person name="Le Bouguenec C."/>
            <person name="Lescat M."/>
            <person name="Mangenot S."/>
            <person name="Martinez-Jehanne V."/>
            <person name="Matic I."/>
            <person name="Nassif X."/>
            <person name="Oztas S."/>
            <person name="Petit M.A."/>
            <person name="Pichon C."/>
            <person name="Rouy Z."/>
            <person name="Ruf C.S."/>
            <person name="Schneider D."/>
            <person name="Tourret J."/>
            <person name="Vacherie B."/>
            <person name="Vallenet D."/>
            <person name="Medigue C."/>
            <person name="Rocha E.P.C."/>
            <person name="Denamur E."/>
        </authorList>
    </citation>
    <scope>NUCLEOTIDE SEQUENCE [LARGE SCALE GENOMIC DNA]</scope>
    <source>
        <strain>55989 / EAEC</strain>
    </source>
</reference>
<comment type="function">
    <text evidence="1">Binds 23S rRNA and is also seen to make contacts with the A and possibly P site tRNAs.</text>
</comment>
<comment type="subunit">
    <text evidence="1">Part of the 50S ribosomal subunit.</text>
</comment>
<comment type="similarity">
    <text evidence="1">Belongs to the universal ribosomal protein uL16 family.</text>
</comment>
<evidence type="ECO:0000255" key="1">
    <source>
        <dbReference type="HAMAP-Rule" id="MF_01342"/>
    </source>
</evidence>
<evidence type="ECO:0000305" key="2"/>
<dbReference type="EMBL" id="CU928145">
    <property type="protein sequence ID" value="CAV00025.1"/>
    <property type="molecule type" value="Genomic_DNA"/>
</dbReference>
<dbReference type="RefSeq" id="WP_000941212.1">
    <property type="nucleotide sequence ID" value="NZ_CP028304.1"/>
</dbReference>
<dbReference type="SMR" id="B7L4K2"/>
<dbReference type="GeneID" id="93778674"/>
<dbReference type="KEGG" id="eck:EC55989_3729"/>
<dbReference type="HOGENOM" id="CLU_078858_2_1_6"/>
<dbReference type="Proteomes" id="UP000000746">
    <property type="component" value="Chromosome"/>
</dbReference>
<dbReference type="GO" id="GO:0022625">
    <property type="term" value="C:cytosolic large ribosomal subunit"/>
    <property type="evidence" value="ECO:0007669"/>
    <property type="project" value="TreeGrafter"/>
</dbReference>
<dbReference type="GO" id="GO:0019843">
    <property type="term" value="F:rRNA binding"/>
    <property type="evidence" value="ECO:0007669"/>
    <property type="project" value="UniProtKB-UniRule"/>
</dbReference>
<dbReference type="GO" id="GO:0003735">
    <property type="term" value="F:structural constituent of ribosome"/>
    <property type="evidence" value="ECO:0007669"/>
    <property type="project" value="InterPro"/>
</dbReference>
<dbReference type="GO" id="GO:0000049">
    <property type="term" value="F:tRNA binding"/>
    <property type="evidence" value="ECO:0007669"/>
    <property type="project" value="UniProtKB-KW"/>
</dbReference>
<dbReference type="GO" id="GO:0006412">
    <property type="term" value="P:translation"/>
    <property type="evidence" value="ECO:0007669"/>
    <property type="project" value="UniProtKB-UniRule"/>
</dbReference>
<dbReference type="CDD" id="cd01433">
    <property type="entry name" value="Ribosomal_L16_L10e"/>
    <property type="match status" value="1"/>
</dbReference>
<dbReference type="FunFam" id="3.90.1170.10:FF:000001">
    <property type="entry name" value="50S ribosomal protein L16"/>
    <property type="match status" value="1"/>
</dbReference>
<dbReference type="Gene3D" id="3.90.1170.10">
    <property type="entry name" value="Ribosomal protein L10e/L16"/>
    <property type="match status" value="1"/>
</dbReference>
<dbReference type="HAMAP" id="MF_01342">
    <property type="entry name" value="Ribosomal_uL16"/>
    <property type="match status" value="1"/>
</dbReference>
<dbReference type="InterPro" id="IPR047873">
    <property type="entry name" value="Ribosomal_uL16"/>
</dbReference>
<dbReference type="InterPro" id="IPR000114">
    <property type="entry name" value="Ribosomal_uL16_bact-type"/>
</dbReference>
<dbReference type="InterPro" id="IPR020798">
    <property type="entry name" value="Ribosomal_uL16_CS"/>
</dbReference>
<dbReference type="InterPro" id="IPR016180">
    <property type="entry name" value="Ribosomal_uL16_dom"/>
</dbReference>
<dbReference type="InterPro" id="IPR036920">
    <property type="entry name" value="Ribosomal_uL16_sf"/>
</dbReference>
<dbReference type="NCBIfam" id="TIGR01164">
    <property type="entry name" value="rplP_bact"/>
    <property type="match status" value="1"/>
</dbReference>
<dbReference type="PANTHER" id="PTHR12220">
    <property type="entry name" value="50S/60S RIBOSOMAL PROTEIN L16"/>
    <property type="match status" value="1"/>
</dbReference>
<dbReference type="PANTHER" id="PTHR12220:SF13">
    <property type="entry name" value="LARGE RIBOSOMAL SUBUNIT PROTEIN UL16M"/>
    <property type="match status" value="1"/>
</dbReference>
<dbReference type="Pfam" id="PF00252">
    <property type="entry name" value="Ribosomal_L16"/>
    <property type="match status" value="1"/>
</dbReference>
<dbReference type="PRINTS" id="PR00060">
    <property type="entry name" value="RIBOSOMALL16"/>
</dbReference>
<dbReference type="SUPFAM" id="SSF54686">
    <property type="entry name" value="Ribosomal protein L16p/L10e"/>
    <property type="match status" value="1"/>
</dbReference>
<dbReference type="PROSITE" id="PS00586">
    <property type="entry name" value="RIBOSOMAL_L16_1"/>
    <property type="match status" value="1"/>
</dbReference>
<dbReference type="PROSITE" id="PS00701">
    <property type="entry name" value="RIBOSOMAL_L16_2"/>
    <property type="match status" value="1"/>
</dbReference>
<name>RL16_ECO55</name>
<accession>B7L4K2</accession>
<organism>
    <name type="scientific">Escherichia coli (strain 55989 / EAEC)</name>
    <dbReference type="NCBI Taxonomy" id="585055"/>
    <lineage>
        <taxon>Bacteria</taxon>
        <taxon>Pseudomonadati</taxon>
        <taxon>Pseudomonadota</taxon>
        <taxon>Gammaproteobacteria</taxon>
        <taxon>Enterobacterales</taxon>
        <taxon>Enterobacteriaceae</taxon>
        <taxon>Escherichia</taxon>
    </lineage>
</organism>
<protein>
    <recommendedName>
        <fullName evidence="1">Large ribosomal subunit protein uL16</fullName>
    </recommendedName>
    <alternativeName>
        <fullName evidence="2">50S ribosomal protein L16</fullName>
    </alternativeName>
</protein>
<proteinExistence type="inferred from homology"/>
<feature type="chain" id="PRO_1000166358" description="Large ribosomal subunit protein uL16">
    <location>
        <begin position="1"/>
        <end position="136"/>
    </location>
</feature>